<keyword id="KW-1064">Adaptive immunity</keyword>
<keyword id="KW-0963">Cytoplasm</keyword>
<keyword id="KW-0217">Developmental protein</keyword>
<keyword id="KW-0391">Immunity</keyword>
<keyword id="KW-0399">Innate immunity</keyword>
<keyword id="KW-0472">Membrane</keyword>
<keyword id="KW-0539">Nucleus</keyword>
<keyword id="KW-0597">Phosphoprotein</keyword>
<keyword id="KW-0653">Protein transport</keyword>
<keyword id="KW-1185">Reference proteome</keyword>
<keyword id="KW-0678">Repressor</keyword>
<keyword id="KW-0804">Transcription</keyword>
<keyword id="KW-0805">Transcription regulation</keyword>
<keyword id="KW-0813">Transport</keyword>
<keyword id="KW-0832">Ubl conjugation</keyword>
<organism>
    <name type="scientific">Bos taurus</name>
    <name type="common">Bovine</name>
    <dbReference type="NCBI Taxonomy" id="9913"/>
    <lineage>
        <taxon>Eukaryota</taxon>
        <taxon>Metazoa</taxon>
        <taxon>Chordata</taxon>
        <taxon>Craniata</taxon>
        <taxon>Vertebrata</taxon>
        <taxon>Euteleostomi</taxon>
        <taxon>Mammalia</taxon>
        <taxon>Eutheria</taxon>
        <taxon>Laurasiatheria</taxon>
        <taxon>Artiodactyla</taxon>
        <taxon>Ruminantia</taxon>
        <taxon>Pecora</taxon>
        <taxon>Bovidae</taxon>
        <taxon>Bovinae</taxon>
        <taxon>Bos</taxon>
    </lineage>
</organism>
<feature type="chain" id="PRO_0000355120" description="Akirin-2">
    <location>
        <begin position="1"/>
        <end position="203"/>
    </location>
</feature>
<feature type="region of interest" description="Disordered" evidence="4">
    <location>
        <begin position="115"/>
        <end position="137"/>
    </location>
</feature>
<feature type="short sequence motif" description="Nuclear localization signal">
    <location>
        <begin position="22"/>
        <end position="27"/>
    </location>
</feature>
<feature type="short sequence motif" description="SYVS motif" evidence="3">
    <location>
        <begin position="200"/>
        <end position="203"/>
    </location>
</feature>
<feature type="compositionally biased region" description="Low complexity" evidence="4">
    <location>
        <begin position="119"/>
        <end position="135"/>
    </location>
</feature>
<feature type="modified residue" description="Phosphoserine" evidence="3">
    <location>
        <position position="18"/>
    </location>
</feature>
<feature type="modified residue" description="Phosphoserine" evidence="3">
    <location>
        <position position="21"/>
    </location>
</feature>
<feature type="modified residue" description="Phosphoserine" evidence="1">
    <location>
        <position position="57"/>
    </location>
</feature>
<accession>A8YXY8</accession>
<name>AKIR2_BOVIN</name>
<sequence>MACGATLKRTLDFDPLLSPASPKRRRCAPLSAPTSAAATPSSAAAATAASFSAAAASPQKYLRMEPSPFGDVSSRLTTEQILYNIKQEYKRMQKRRHLETSFQQTDPCCTSDAQPHAFLLSGPASPGTPSGTSSPLKKEQPLFTLRQVGMICERLLKEREEKVREEYEEILNTKLAEQYDAFVKFTHDQIMRRYGEQPASYVS</sequence>
<gene>
    <name evidence="6" type="primary">AKIRIN2</name>
</gene>
<comment type="function">
    <text evidence="1 3">Molecular adapter that acts as a bridge between a variety of multiprotein complexes, and which is involved in embryonic development, immunity, myogenesis and brain development (By similarity). Plays a key role in nuclear protein degradation by promoting import of proteasomes into the nucleus: directly binds to fully assembled 20S proteasomes at one end and to nuclear import receptor IPO9 at the other end, bridging them together and mediating the import of pre-assembled proteasome complexes through the nuclear pore (By similarity). Involved in innate immunity by regulating the production of interleukin-6 (IL6) downstream of Toll-like receptor (TLR): acts by bridging the NF-kappa-B inhibitor NFKBIZ and the SWI/SNF complex, leading to promote induction of IL6. Also involved in adaptive immunity by promoting B-cell activation. Involved in brain development: required for the survival and proliferation of cerebral cortical progenitor cells. Involved in myogenesis: required for skeletal muscle formation and skeletal development, possibly by regulating expression of muscle differentiation factors (By similarity).</text>
</comment>
<comment type="subunit">
    <text evidence="1 2 3">Homodimer. Interacts with IPO9; the interaction is direct. Associates with 20S and 26S proteasomes (By similarity). Interacts with SMARCD1; promoting SWI/SNF complex recruitment. Interacts with NFKBIZ (By similarity). Interacts with YWHAB (By similarity).</text>
</comment>
<comment type="subcellular location">
    <subcellularLocation>
        <location evidence="1">Nucleus</location>
    </subcellularLocation>
    <subcellularLocation>
        <location evidence="1">Cytoplasm</location>
    </subcellularLocation>
    <subcellularLocation>
        <location evidence="1">Membrane</location>
    </subcellularLocation>
    <text evidence="1">Present mainly in the nuclear fraction, and at much lower level in the cytoplasmic and membrane fractions.</text>
</comment>
<comment type="PTM">
    <text evidence="3">Polyubiquitinated. Polyubiquitination is dependent of UBR5 that extends pre-ubiquitinated AKIRIN2.</text>
</comment>
<comment type="similarity">
    <text evidence="5">Belongs to the akirin family.</text>
</comment>
<dbReference type="EMBL" id="BC104619">
    <property type="protein sequence ID" value="AAI04620.1"/>
    <property type="molecule type" value="mRNA"/>
</dbReference>
<dbReference type="RefSeq" id="NP_001103557.1">
    <property type="nucleotide sequence ID" value="NM_001110087.1"/>
</dbReference>
<dbReference type="SMR" id="A8YXY8"/>
<dbReference type="FunCoup" id="A8YXY8">
    <property type="interactions" value="4471"/>
</dbReference>
<dbReference type="STRING" id="9913.ENSBTAP00000004897"/>
<dbReference type="PaxDb" id="9913-ENSBTAP00000004897"/>
<dbReference type="Ensembl" id="ENSBTAT00000004897.5">
    <property type="protein sequence ID" value="ENSBTAP00000004897.4"/>
    <property type="gene ID" value="ENSBTAG00000003764.6"/>
</dbReference>
<dbReference type="GeneID" id="614292"/>
<dbReference type="KEGG" id="bta:614292"/>
<dbReference type="CTD" id="55122"/>
<dbReference type="VEuPathDB" id="HostDB:ENSBTAG00000003764"/>
<dbReference type="VGNC" id="VGNC:25794">
    <property type="gene designation" value="AKIRIN2"/>
</dbReference>
<dbReference type="eggNOG" id="KOG4330">
    <property type="taxonomic scope" value="Eukaryota"/>
</dbReference>
<dbReference type="GeneTree" id="ENSGT00940000156096"/>
<dbReference type="HOGENOM" id="CLU_119227_0_0_1"/>
<dbReference type="InParanoid" id="A8YXY8"/>
<dbReference type="OMA" id="QADGCCP"/>
<dbReference type="OrthoDB" id="10039914at2759"/>
<dbReference type="TreeFam" id="TF317123"/>
<dbReference type="Proteomes" id="UP000009136">
    <property type="component" value="Chromosome 9"/>
</dbReference>
<dbReference type="Bgee" id="ENSBTAG00000003764">
    <property type="expression patterns" value="Expressed in oocyte and 102 other cell types or tissues"/>
</dbReference>
<dbReference type="GO" id="GO:0000785">
    <property type="term" value="C:chromatin"/>
    <property type="evidence" value="ECO:0000318"/>
    <property type="project" value="GO_Central"/>
</dbReference>
<dbReference type="GO" id="GO:0005737">
    <property type="term" value="C:cytoplasm"/>
    <property type="evidence" value="ECO:0007669"/>
    <property type="project" value="UniProtKB-SubCell"/>
</dbReference>
<dbReference type="GO" id="GO:0016020">
    <property type="term" value="C:membrane"/>
    <property type="evidence" value="ECO:0007669"/>
    <property type="project" value="UniProtKB-SubCell"/>
</dbReference>
<dbReference type="GO" id="GO:0005634">
    <property type="term" value="C:nucleus"/>
    <property type="evidence" value="ECO:0000250"/>
    <property type="project" value="UniProtKB"/>
</dbReference>
<dbReference type="GO" id="GO:0017053">
    <property type="term" value="C:transcription repressor complex"/>
    <property type="evidence" value="ECO:0000250"/>
    <property type="project" value="UniProtKB"/>
</dbReference>
<dbReference type="GO" id="GO:0030674">
    <property type="term" value="F:protein-macromolecule adaptor activity"/>
    <property type="evidence" value="ECO:0000250"/>
    <property type="project" value="UniProtKB"/>
</dbReference>
<dbReference type="GO" id="GO:0003712">
    <property type="term" value="F:transcription coregulator activity"/>
    <property type="evidence" value="ECO:0000318"/>
    <property type="project" value="GO_Central"/>
</dbReference>
<dbReference type="GO" id="GO:0002250">
    <property type="term" value="P:adaptive immune response"/>
    <property type="evidence" value="ECO:0007669"/>
    <property type="project" value="UniProtKB-KW"/>
</dbReference>
<dbReference type="GO" id="GO:0021987">
    <property type="term" value="P:cerebral cortex development"/>
    <property type="evidence" value="ECO:0000250"/>
    <property type="project" value="UniProtKB"/>
</dbReference>
<dbReference type="GO" id="GO:0042742">
    <property type="term" value="P:defense response to bacterium"/>
    <property type="evidence" value="ECO:0000250"/>
    <property type="project" value="UniProtKB"/>
</dbReference>
<dbReference type="GO" id="GO:0045087">
    <property type="term" value="P:innate immune response"/>
    <property type="evidence" value="ECO:0007669"/>
    <property type="project" value="UniProtKB-KW"/>
</dbReference>
<dbReference type="GO" id="GO:0071630">
    <property type="term" value="P:nuclear protein quality control by the ubiquitin-proteasome system"/>
    <property type="evidence" value="ECO:0000250"/>
    <property type="project" value="UniProtKB"/>
</dbReference>
<dbReference type="GO" id="GO:0002821">
    <property type="term" value="P:positive regulation of adaptive immune response"/>
    <property type="evidence" value="ECO:0000250"/>
    <property type="project" value="UniProtKB"/>
</dbReference>
<dbReference type="GO" id="GO:0045089">
    <property type="term" value="P:positive regulation of innate immune response"/>
    <property type="evidence" value="ECO:0000250"/>
    <property type="project" value="UniProtKB"/>
</dbReference>
<dbReference type="GO" id="GO:0032755">
    <property type="term" value="P:positive regulation of interleukin-6 production"/>
    <property type="evidence" value="ECO:0000250"/>
    <property type="project" value="UniProtKB"/>
</dbReference>
<dbReference type="GO" id="GO:0045944">
    <property type="term" value="P:positive regulation of transcription by RNA polymerase II"/>
    <property type="evidence" value="ECO:0000250"/>
    <property type="project" value="UniProtKB"/>
</dbReference>
<dbReference type="GO" id="GO:0031144">
    <property type="term" value="P:proteasome localization"/>
    <property type="evidence" value="ECO:0000250"/>
    <property type="project" value="UniProtKB"/>
</dbReference>
<dbReference type="GO" id="GO:0006606">
    <property type="term" value="P:protein import into nucleus"/>
    <property type="evidence" value="ECO:0000250"/>
    <property type="project" value="UniProtKB"/>
</dbReference>
<dbReference type="CDD" id="cd22244">
    <property type="entry name" value="akirin-2"/>
    <property type="match status" value="1"/>
</dbReference>
<dbReference type="InterPro" id="IPR024132">
    <property type="entry name" value="Akirin"/>
</dbReference>
<dbReference type="PANTHER" id="PTHR13293:SF8">
    <property type="entry name" value="AKIRIN-2"/>
    <property type="match status" value="1"/>
</dbReference>
<dbReference type="PANTHER" id="PTHR13293">
    <property type="entry name" value="AKIRIN-RELATED"/>
    <property type="match status" value="1"/>
</dbReference>
<protein>
    <recommendedName>
        <fullName>Akirin-2</fullName>
    </recommendedName>
</protein>
<evidence type="ECO:0000250" key="1">
    <source>
        <dbReference type="UniProtKB" id="B1AXD8"/>
    </source>
</evidence>
<evidence type="ECO:0000250" key="2">
    <source>
        <dbReference type="UniProtKB" id="Q25C79"/>
    </source>
</evidence>
<evidence type="ECO:0000250" key="3">
    <source>
        <dbReference type="UniProtKB" id="Q53H80"/>
    </source>
</evidence>
<evidence type="ECO:0000256" key="4">
    <source>
        <dbReference type="SAM" id="MobiDB-lite"/>
    </source>
</evidence>
<evidence type="ECO:0000305" key="5"/>
<evidence type="ECO:0000312" key="6">
    <source>
        <dbReference type="EMBL" id="AAI04620.1"/>
    </source>
</evidence>
<proteinExistence type="evidence at transcript level"/>
<reference evidence="6" key="1">
    <citation type="submission" date="2005-09" db="EMBL/GenBank/DDBJ databases">
        <authorList>
            <consortium name="NIH - Mammalian Gene Collection (MGC) project"/>
        </authorList>
    </citation>
    <scope>NUCLEOTIDE SEQUENCE [LARGE SCALE MRNA]</scope>
    <source>
        <strain evidence="6">Hereford</strain>
        <tissue evidence="6">Uterus</tissue>
    </source>
</reference>